<sequence>MTRVRRGYIARRRRTKIRLFASTFRGAHSRLTRTATQQKMRALVSIYRDRGRQKREFRRLWIARINAATHENGVSYSRLINDLYKRQLLLNRKIPAQIARYNLNSLYMISNEIIKEKRD</sequence>
<name>RK20_AMBTC</name>
<evidence type="ECO:0000255" key="1">
    <source>
        <dbReference type="HAMAP-Rule" id="MF_00382"/>
    </source>
</evidence>
<evidence type="ECO:0000305" key="2"/>
<accession>Q70XY3</accession>
<organism>
    <name type="scientific">Amborella trichopoda</name>
    <dbReference type="NCBI Taxonomy" id="13333"/>
    <lineage>
        <taxon>Eukaryota</taxon>
        <taxon>Viridiplantae</taxon>
        <taxon>Streptophyta</taxon>
        <taxon>Embryophyta</taxon>
        <taxon>Tracheophyta</taxon>
        <taxon>Spermatophyta</taxon>
        <taxon>Magnoliopsida</taxon>
        <taxon>Amborellales</taxon>
        <taxon>Amborellaceae</taxon>
        <taxon>Amborella</taxon>
    </lineage>
</organism>
<reference key="1">
    <citation type="journal article" date="2003" name="Mol. Biol. Evol.">
        <title>Analysis of the Amborella trichopoda chloroplast genome sequence suggests that Amborella is not a basal angiosperm.</title>
        <authorList>
            <person name="Goremykin V.V."/>
            <person name="Hirsch-Ernst K.I."/>
            <person name="Wolfl S."/>
            <person name="Hellwig F.H."/>
        </authorList>
    </citation>
    <scope>NUCLEOTIDE SEQUENCE [LARGE SCALE GENOMIC DNA]</scope>
</reference>
<comment type="function">
    <text evidence="1">Binds directly to 23S ribosomal RNA and is necessary for the in vitro assembly process of the 50S ribosomal subunit. It is not involved in the protein synthesizing functions of that subunit.</text>
</comment>
<comment type="subcellular location">
    <subcellularLocation>
        <location>Plastid</location>
        <location>Chloroplast</location>
    </subcellularLocation>
</comment>
<comment type="similarity">
    <text evidence="1">Belongs to the bacterial ribosomal protein bL20 family.</text>
</comment>
<proteinExistence type="inferred from homology"/>
<protein>
    <recommendedName>
        <fullName evidence="1">Large ribosomal subunit protein bL20c</fullName>
    </recommendedName>
    <alternativeName>
        <fullName evidence="2">50S ribosomal protein L20, chloroplastic</fullName>
    </alternativeName>
</protein>
<keyword id="KW-0150">Chloroplast</keyword>
<keyword id="KW-0934">Plastid</keyword>
<keyword id="KW-1185">Reference proteome</keyword>
<keyword id="KW-0687">Ribonucleoprotein</keyword>
<keyword id="KW-0689">Ribosomal protein</keyword>
<keyword id="KW-0694">RNA-binding</keyword>
<keyword id="KW-0699">rRNA-binding</keyword>
<feature type="chain" id="PRO_0000177276" description="Large ribosomal subunit protein bL20c">
    <location>
        <begin position="1"/>
        <end position="119"/>
    </location>
</feature>
<gene>
    <name evidence="1" type="primary">rpl20</name>
</gene>
<dbReference type="EMBL" id="AJ506156">
    <property type="protein sequence ID" value="CAD45129.1"/>
    <property type="molecule type" value="Genomic_DNA"/>
</dbReference>
<dbReference type="RefSeq" id="NP_904122.1">
    <property type="nucleotide sequence ID" value="NC_005086.1"/>
</dbReference>
<dbReference type="SMR" id="Q70XY3"/>
<dbReference type="STRING" id="13333.Q70XY3"/>
<dbReference type="GeneID" id="2546584"/>
<dbReference type="KEGG" id="atr:2546584"/>
<dbReference type="OrthoDB" id="10251781at2759"/>
<dbReference type="Proteomes" id="UP000017836">
    <property type="component" value="Chloroplast"/>
</dbReference>
<dbReference type="GO" id="GO:0009507">
    <property type="term" value="C:chloroplast"/>
    <property type="evidence" value="ECO:0007669"/>
    <property type="project" value="UniProtKB-SubCell"/>
</dbReference>
<dbReference type="GO" id="GO:1990904">
    <property type="term" value="C:ribonucleoprotein complex"/>
    <property type="evidence" value="ECO:0007669"/>
    <property type="project" value="UniProtKB-KW"/>
</dbReference>
<dbReference type="GO" id="GO:0005840">
    <property type="term" value="C:ribosome"/>
    <property type="evidence" value="ECO:0007669"/>
    <property type="project" value="UniProtKB-KW"/>
</dbReference>
<dbReference type="GO" id="GO:0019843">
    <property type="term" value="F:rRNA binding"/>
    <property type="evidence" value="ECO:0007669"/>
    <property type="project" value="UniProtKB-UniRule"/>
</dbReference>
<dbReference type="GO" id="GO:0003735">
    <property type="term" value="F:structural constituent of ribosome"/>
    <property type="evidence" value="ECO:0000318"/>
    <property type="project" value="GO_Central"/>
</dbReference>
<dbReference type="GO" id="GO:0000027">
    <property type="term" value="P:ribosomal large subunit assembly"/>
    <property type="evidence" value="ECO:0007669"/>
    <property type="project" value="UniProtKB-UniRule"/>
</dbReference>
<dbReference type="GO" id="GO:0006412">
    <property type="term" value="P:translation"/>
    <property type="evidence" value="ECO:0007669"/>
    <property type="project" value="InterPro"/>
</dbReference>
<dbReference type="CDD" id="cd07026">
    <property type="entry name" value="Ribosomal_L20"/>
    <property type="match status" value="1"/>
</dbReference>
<dbReference type="FunFam" id="1.10.1900.20:FF:000001">
    <property type="entry name" value="50S ribosomal protein L20"/>
    <property type="match status" value="1"/>
</dbReference>
<dbReference type="Gene3D" id="6.10.160.10">
    <property type="match status" value="1"/>
</dbReference>
<dbReference type="Gene3D" id="1.10.1900.20">
    <property type="entry name" value="Ribosomal protein L20"/>
    <property type="match status" value="1"/>
</dbReference>
<dbReference type="HAMAP" id="MF_00382">
    <property type="entry name" value="Ribosomal_bL20"/>
    <property type="match status" value="1"/>
</dbReference>
<dbReference type="InterPro" id="IPR005813">
    <property type="entry name" value="Ribosomal_bL20"/>
</dbReference>
<dbReference type="InterPro" id="IPR049946">
    <property type="entry name" value="RIBOSOMAL_L20_CS"/>
</dbReference>
<dbReference type="InterPro" id="IPR035566">
    <property type="entry name" value="Ribosomal_protein_bL20_C"/>
</dbReference>
<dbReference type="NCBIfam" id="TIGR01032">
    <property type="entry name" value="rplT_bact"/>
    <property type="match status" value="1"/>
</dbReference>
<dbReference type="PANTHER" id="PTHR10986">
    <property type="entry name" value="39S RIBOSOMAL PROTEIN L20"/>
    <property type="match status" value="1"/>
</dbReference>
<dbReference type="Pfam" id="PF00453">
    <property type="entry name" value="Ribosomal_L20"/>
    <property type="match status" value="1"/>
</dbReference>
<dbReference type="PRINTS" id="PR00062">
    <property type="entry name" value="RIBOSOMALL20"/>
</dbReference>
<dbReference type="SUPFAM" id="SSF74731">
    <property type="entry name" value="Ribosomal protein L20"/>
    <property type="match status" value="1"/>
</dbReference>
<dbReference type="PROSITE" id="PS00937">
    <property type="entry name" value="RIBOSOMAL_L20"/>
    <property type="match status" value="1"/>
</dbReference>
<geneLocation type="chloroplast"/>